<dbReference type="EC" id="7.5.2.6" evidence="1"/>
<dbReference type="EMBL" id="CP000010">
    <property type="protein sequence ID" value="AAU49498.1"/>
    <property type="status" value="ALT_INIT"/>
    <property type="molecule type" value="Genomic_DNA"/>
</dbReference>
<dbReference type="RefSeq" id="WP_004186431.1">
    <property type="nucleotide sequence ID" value="NC_006348.1"/>
</dbReference>
<dbReference type="RefSeq" id="YP_103507.1">
    <property type="nucleotide sequence ID" value="NC_006348.1"/>
</dbReference>
<dbReference type="SMR" id="Q62IG3"/>
<dbReference type="GeneID" id="93059617"/>
<dbReference type="KEGG" id="bma:BMA1912"/>
<dbReference type="PATRIC" id="fig|243160.12.peg.1956"/>
<dbReference type="eggNOG" id="COG1132">
    <property type="taxonomic scope" value="Bacteria"/>
</dbReference>
<dbReference type="HOGENOM" id="CLU_000604_84_3_4"/>
<dbReference type="Proteomes" id="UP000006693">
    <property type="component" value="Chromosome 1"/>
</dbReference>
<dbReference type="GO" id="GO:0005886">
    <property type="term" value="C:plasma membrane"/>
    <property type="evidence" value="ECO:0007669"/>
    <property type="project" value="UniProtKB-SubCell"/>
</dbReference>
<dbReference type="GO" id="GO:0015421">
    <property type="term" value="F:ABC-type oligopeptide transporter activity"/>
    <property type="evidence" value="ECO:0007669"/>
    <property type="project" value="TreeGrafter"/>
</dbReference>
<dbReference type="GO" id="GO:0005524">
    <property type="term" value="F:ATP binding"/>
    <property type="evidence" value="ECO:0007669"/>
    <property type="project" value="UniProtKB-KW"/>
</dbReference>
<dbReference type="GO" id="GO:0016887">
    <property type="term" value="F:ATP hydrolysis activity"/>
    <property type="evidence" value="ECO:0007669"/>
    <property type="project" value="InterPro"/>
</dbReference>
<dbReference type="GO" id="GO:0034040">
    <property type="term" value="F:ATPase-coupled lipid transmembrane transporter activity"/>
    <property type="evidence" value="ECO:0007669"/>
    <property type="project" value="InterPro"/>
</dbReference>
<dbReference type="CDD" id="cd18552">
    <property type="entry name" value="ABC_6TM_MsbA_like"/>
    <property type="match status" value="1"/>
</dbReference>
<dbReference type="FunFam" id="3.40.50.300:FF:000221">
    <property type="entry name" value="Multidrug ABC transporter ATP-binding protein"/>
    <property type="match status" value="1"/>
</dbReference>
<dbReference type="Gene3D" id="1.20.1560.10">
    <property type="entry name" value="ABC transporter type 1, transmembrane domain"/>
    <property type="match status" value="1"/>
</dbReference>
<dbReference type="Gene3D" id="3.40.50.300">
    <property type="entry name" value="P-loop containing nucleotide triphosphate hydrolases"/>
    <property type="match status" value="1"/>
</dbReference>
<dbReference type="InterPro" id="IPR003593">
    <property type="entry name" value="AAA+_ATPase"/>
</dbReference>
<dbReference type="InterPro" id="IPR011527">
    <property type="entry name" value="ABC1_TM_dom"/>
</dbReference>
<dbReference type="InterPro" id="IPR036640">
    <property type="entry name" value="ABC1_TM_sf"/>
</dbReference>
<dbReference type="InterPro" id="IPR003439">
    <property type="entry name" value="ABC_transporter-like_ATP-bd"/>
</dbReference>
<dbReference type="InterPro" id="IPR017871">
    <property type="entry name" value="ABC_transporter-like_CS"/>
</dbReference>
<dbReference type="InterPro" id="IPR011917">
    <property type="entry name" value="ABC_transpr_lipidA"/>
</dbReference>
<dbReference type="InterPro" id="IPR027417">
    <property type="entry name" value="P-loop_NTPase"/>
</dbReference>
<dbReference type="InterPro" id="IPR039421">
    <property type="entry name" value="Type_1_exporter"/>
</dbReference>
<dbReference type="NCBIfam" id="TIGR02203">
    <property type="entry name" value="MsbA_lipidA"/>
    <property type="match status" value="1"/>
</dbReference>
<dbReference type="PANTHER" id="PTHR43394:SF1">
    <property type="entry name" value="ATP-BINDING CASSETTE SUB-FAMILY B MEMBER 10, MITOCHONDRIAL"/>
    <property type="match status" value="1"/>
</dbReference>
<dbReference type="PANTHER" id="PTHR43394">
    <property type="entry name" value="ATP-DEPENDENT PERMEASE MDL1, MITOCHONDRIAL"/>
    <property type="match status" value="1"/>
</dbReference>
<dbReference type="Pfam" id="PF00664">
    <property type="entry name" value="ABC_membrane"/>
    <property type="match status" value="1"/>
</dbReference>
<dbReference type="Pfam" id="PF00005">
    <property type="entry name" value="ABC_tran"/>
    <property type="match status" value="1"/>
</dbReference>
<dbReference type="SMART" id="SM00382">
    <property type="entry name" value="AAA"/>
    <property type="match status" value="1"/>
</dbReference>
<dbReference type="SUPFAM" id="SSF90123">
    <property type="entry name" value="ABC transporter transmembrane region"/>
    <property type="match status" value="1"/>
</dbReference>
<dbReference type="SUPFAM" id="SSF52540">
    <property type="entry name" value="P-loop containing nucleoside triphosphate hydrolases"/>
    <property type="match status" value="1"/>
</dbReference>
<dbReference type="PROSITE" id="PS50929">
    <property type="entry name" value="ABC_TM1F"/>
    <property type="match status" value="1"/>
</dbReference>
<dbReference type="PROSITE" id="PS00211">
    <property type="entry name" value="ABC_TRANSPORTER_1"/>
    <property type="match status" value="1"/>
</dbReference>
<dbReference type="PROSITE" id="PS50893">
    <property type="entry name" value="ABC_TRANSPORTER_2"/>
    <property type="match status" value="1"/>
</dbReference>
<dbReference type="PROSITE" id="PS51239">
    <property type="entry name" value="MSBA"/>
    <property type="match status" value="1"/>
</dbReference>
<gene>
    <name evidence="1" type="primary">msbA</name>
    <name type="ordered locus">BMA1912</name>
</gene>
<accession>Q62IG3</accession>
<reference key="1">
    <citation type="journal article" date="2004" name="Proc. Natl. Acad. Sci. U.S.A.">
        <title>Structural flexibility in the Burkholderia mallei genome.</title>
        <authorList>
            <person name="Nierman W.C."/>
            <person name="DeShazer D."/>
            <person name="Kim H.S."/>
            <person name="Tettelin H."/>
            <person name="Nelson K.E."/>
            <person name="Feldblyum T.V."/>
            <person name="Ulrich R.L."/>
            <person name="Ronning C.M."/>
            <person name="Brinkac L.M."/>
            <person name="Daugherty S.C."/>
            <person name="Davidsen T.D."/>
            <person name="DeBoy R.T."/>
            <person name="Dimitrov G."/>
            <person name="Dodson R.J."/>
            <person name="Durkin A.S."/>
            <person name="Gwinn M.L."/>
            <person name="Haft D.H."/>
            <person name="Khouri H.M."/>
            <person name="Kolonay J.F."/>
            <person name="Madupu R."/>
            <person name="Mohammoud Y."/>
            <person name="Nelson W.C."/>
            <person name="Radune D."/>
            <person name="Romero C.M."/>
            <person name="Sarria S."/>
            <person name="Selengut J."/>
            <person name="Shamblin C."/>
            <person name="Sullivan S.A."/>
            <person name="White O."/>
            <person name="Yu Y."/>
            <person name="Zafar N."/>
            <person name="Zhou L."/>
            <person name="Fraser C.M."/>
        </authorList>
    </citation>
    <scope>NUCLEOTIDE SEQUENCE [LARGE SCALE GENOMIC DNA]</scope>
    <source>
        <strain>ATCC 23344</strain>
    </source>
</reference>
<name>MSBA_BURMA</name>
<keyword id="KW-0067">ATP-binding</keyword>
<keyword id="KW-0997">Cell inner membrane</keyword>
<keyword id="KW-1003">Cell membrane</keyword>
<keyword id="KW-0445">Lipid transport</keyword>
<keyword id="KW-0472">Membrane</keyword>
<keyword id="KW-0547">Nucleotide-binding</keyword>
<keyword id="KW-1185">Reference proteome</keyword>
<keyword id="KW-1278">Translocase</keyword>
<keyword id="KW-0812">Transmembrane</keyword>
<keyword id="KW-1133">Transmembrane helix</keyword>
<keyword id="KW-0813">Transport</keyword>
<sequence>MSVKPTLSKPIGGQDASSPAVVMRRLWPYVKPLVWVLVAGVLAMAAVAATEAGIPALLKPLLDHGFGSKGDMTTKLYVPAAVVGLALARAIAQYASGYLLQYVSNRILLDLRIQMFERMIHTGVSFFQRETASTVINAVVFEVNQVLSVLMGVTITLVRDSLTVVFLLGYLFYLNWRLTLIVAILLPCIGWLVGKINRRLRRLNREHQTLTNQLAYIVEETVGGYKVVKVHNGEPYEIGRFNELSRKLRGYSMRMTVSGGLAQPLTQFLASIALAVVLTIAVVQSANDQTTVGGFVAFVTAMLLIISPLKHLMDVNQPLQRGMTAAELIFGLIDEPREPEGGGKPLARASGAIEFSHVSFSYGMSRDGRQTLDDVSFTVAPGEMVALAGPSGSGKTTLVNLLPRFFDPSSGSVRVDGVALPEYSLRDLRNQIAMVSQDVVLFNDTIAANVAYGQAPERDRVEAALRAANLWETVTAMPDGIDTLVGDNGMRLSGGQRQRLAIARAIYKDAPILILDEATSALDSESERHVQAALETLMKGRTTLVIAHRLSTIERADRILVLEGGKIVESGSHRELLEQGGLYAHLHRIQFQQDAG</sequence>
<organism>
    <name type="scientific">Burkholderia mallei (strain ATCC 23344)</name>
    <dbReference type="NCBI Taxonomy" id="243160"/>
    <lineage>
        <taxon>Bacteria</taxon>
        <taxon>Pseudomonadati</taxon>
        <taxon>Pseudomonadota</taxon>
        <taxon>Betaproteobacteria</taxon>
        <taxon>Burkholderiales</taxon>
        <taxon>Burkholderiaceae</taxon>
        <taxon>Burkholderia</taxon>
        <taxon>pseudomallei group</taxon>
    </lineage>
</organism>
<feature type="chain" id="PRO_0000092571" description="ATP-dependent lipid A-core flippase">
    <location>
        <begin position="1"/>
        <end position="596"/>
    </location>
</feature>
<feature type="transmembrane region" description="Helical" evidence="1">
    <location>
        <begin position="34"/>
        <end position="54"/>
    </location>
</feature>
<feature type="transmembrane region" description="Helical" evidence="1">
    <location>
        <begin position="80"/>
        <end position="100"/>
    </location>
</feature>
<feature type="transmembrane region" description="Helical" evidence="1">
    <location>
        <begin position="138"/>
        <end position="158"/>
    </location>
</feature>
<feature type="transmembrane region" description="Helical" evidence="1">
    <location>
        <begin position="164"/>
        <end position="184"/>
    </location>
</feature>
<feature type="transmembrane region" description="Helical" evidence="1">
    <location>
        <begin position="263"/>
        <end position="283"/>
    </location>
</feature>
<feature type="transmembrane region" description="Helical" evidence="1">
    <location>
        <begin position="292"/>
        <end position="312"/>
    </location>
</feature>
<feature type="domain" description="ABC transmembrane type-1" evidence="1">
    <location>
        <begin position="38"/>
        <end position="321"/>
    </location>
</feature>
<feature type="domain" description="ABC transporter" evidence="1">
    <location>
        <begin position="353"/>
        <end position="589"/>
    </location>
</feature>
<feature type="binding site" evidence="1">
    <location>
        <begin position="389"/>
        <end position="396"/>
    </location>
    <ligand>
        <name>ATP</name>
        <dbReference type="ChEBI" id="CHEBI:30616"/>
    </ligand>
</feature>
<proteinExistence type="inferred from homology"/>
<protein>
    <recommendedName>
        <fullName evidence="1">ATP-dependent lipid A-core flippase</fullName>
        <ecNumber evidence="1">7.5.2.6</ecNumber>
    </recommendedName>
    <alternativeName>
        <fullName evidence="1">Lipid A export ATP-binding/permease protein MsbA</fullName>
    </alternativeName>
</protein>
<evidence type="ECO:0000255" key="1">
    <source>
        <dbReference type="HAMAP-Rule" id="MF_01703"/>
    </source>
</evidence>
<evidence type="ECO:0000305" key="2"/>
<comment type="function">
    <text evidence="1">Involved in lipopolysaccharide (LPS) biosynthesis. Translocates lipid A-core from the inner to the outer leaflet of the inner membrane. Transmembrane domains (TMD) form a pore in the inner membrane and the ATP-binding domain (NBD) is responsible for energy generation.</text>
</comment>
<comment type="catalytic activity">
    <reaction evidence="1">
        <text>ATP + H2O + lipid A-core oligosaccharideSide 1 = ADP + phosphate + lipid A-core oligosaccharideSide 2.</text>
        <dbReference type="EC" id="7.5.2.6"/>
    </reaction>
</comment>
<comment type="subunit">
    <text evidence="1">Homodimer.</text>
</comment>
<comment type="subcellular location">
    <subcellularLocation>
        <location evidence="1">Cell inner membrane</location>
        <topology evidence="1">Multi-pass membrane protein</topology>
    </subcellularLocation>
</comment>
<comment type="domain">
    <text evidence="1">In MsbA the ATP-binding domain (NBD) and the transmembrane domain (TMD) are fused.</text>
</comment>
<comment type="similarity">
    <text evidence="1">Belongs to the ABC transporter superfamily. Lipid exporter (TC 3.A.1.106) family.</text>
</comment>
<comment type="sequence caution" evidence="2">
    <conflict type="erroneous initiation">
        <sequence resource="EMBL-CDS" id="AAU49498"/>
    </conflict>
</comment>